<evidence type="ECO:0000255" key="1">
    <source>
        <dbReference type="HAMAP-Rule" id="MF_00377"/>
    </source>
</evidence>
<evidence type="ECO:0000256" key="2">
    <source>
        <dbReference type="SAM" id="MobiDB-lite"/>
    </source>
</evidence>
<evidence type="ECO:0000269" key="3">
    <source>
    </source>
</evidence>
<evidence type="ECO:0000305" key="4"/>
<organism>
    <name type="scientific">Deinococcus radiodurans (strain ATCC 13939 / DSM 20539 / JCM 16871 / CCUG 27074 / LMG 4051 / NBRC 15346 / NCIMB 9279 / VKM B-1422 / R1)</name>
    <dbReference type="NCBI Taxonomy" id="243230"/>
    <lineage>
        <taxon>Bacteria</taxon>
        <taxon>Thermotogati</taxon>
        <taxon>Deinococcota</taxon>
        <taxon>Deinococci</taxon>
        <taxon>Deinococcales</taxon>
        <taxon>Deinococcaceae</taxon>
        <taxon>Deinococcus</taxon>
    </lineage>
</organism>
<comment type="function">
    <text evidence="1">Plays an essential role in the initiation and regulation of chromosomal replication. ATP-DnaA binds to the origin of replication (oriC) to initiate formation of the DNA replication initiation complex once per cell cycle. Binds the DnaA box (a 9 base pair repeat at the origin) and separates the double-stranded (ds)DNA. Forms a right-handed helical filament on oriC DNA; dsDNA binds to the exterior of the filament while single-stranded (ss)DNA is stabiized in the filament's interior. The ATP-DnaA-oriC complex binds and stabilizes one strand of the AT-rich DNA unwinding element (DUE), permitting loading of DNA polymerase. After initiation quickly degrades to an ADP-DnaA complex that is not apt for DNA replication. Binds acidic phospholipids.</text>
</comment>
<comment type="function">
    <text evidence="3">Strand separation requires the DnaA boxes and adjacent DnaA-trio motifs but works equally well with ADP or ATP.</text>
</comment>
<comment type="subunit">
    <text evidence="1">Oligomerizes as a right-handed, spiral filament on DNA at oriC.</text>
</comment>
<comment type="subcellular location">
    <subcellularLocation>
        <location evidence="1">Cytoplasm</location>
    </subcellularLocation>
</comment>
<comment type="domain">
    <text evidence="1">Domain I is involved in oligomerization and binding regulators, domain II is flexibile and of varying length in different bacteria, domain III forms the AAA+ region, while domain IV binds dsDNA.</text>
</comment>
<comment type="similarity">
    <text evidence="1 4">Belongs to the DnaA family.</text>
</comment>
<sequence>MSQEIWADVLAYVRKNVSDLEYTTWFAPVKPLGVQEGSLLLGVRNSFTKDWFRDHYLELLLAALRSLGAEHPQVEFQVLPAAQDALLLPNDPPPAPEAAAPTPKTKAAPTPPPSTPGDNRKTLNPKYTFENFVVGPNNNLAHAAALAVAESPGKAYNPLFIYGDVGLGKTHLMHAVGHYLAERFPEKRIEYVSTETFTNELINAIRDDKTTQFRNRYRSVDLLLVDDIQFLAGKERTQEEFFHTFNALYESNKQIILSSDRPPKDIQTLEGRLRSRFEWGLITDIQSPEYETRVAILKMNAEQGHITIPQEVLELIARQVTSNIRELEGALMRVVAFASLNNVPFSRAAAAKALSNVFAPQEAKVEMTDVLRQVAAHYGTTPDLIRGSGRARDIVVPRQVAQYLIRALTDHSLPEIGQFFGRDHSTVMHAVSKITEQMGKDPELAATVNTLRNRIQGKEEEEEVGA</sequence>
<protein>
    <recommendedName>
        <fullName evidence="1">Chromosomal replication initiator protein DnaA</fullName>
    </recommendedName>
</protein>
<dbReference type="EMBL" id="AE000513">
    <property type="protein sequence ID" value="AAF09596.1"/>
    <property type="molecule type" value="Genomic_DNA"/>
</dbReference>
<dbReference type="PIR" id="E75571">
    <property type="entry name" value="E75571"/>
</dbReference>
<dbReference type="RefSeq" id="NP_293728.1">
    <property type="nucleotide sequence ID" value="NC_001263.1"/>
</dbReference>
<dbReference type="RefSeq" id="WP_027480258.1">
    <property type="nucleotide sequence ID" value="NC_001263.1"/>
</dbReference>
<dbReference type="SMR" id="Q9RYE7"/>
<dbReference type="FunCoup" id="Q9RYE7">
    <property type="interactions" value="334"/>
</dbReference>
<dbReference type="STRING" id="243230.DR_0002"/>
<dbReference type="PaxDb" id="243230-DR_0002"/>
<dbReference type="EnsemblBacteria" id="AAF09596">
    <property type="protein sequence ID" value="AAF09596"/>
    <property type="gene ID" value="DR_0002"/>
</dbReference>
<dbReference type="GeneID" id="69516229"/>
<dbReference type="KEGG" id="dra:DR_0002"/>
<dbReference type="PATRIC" id="fig|243230.17.peg.167"/>
<dbReference type="eggNOG" id="COG0593">
    <property type="taxonomic scope" value="Bacteria"/>
</dbReference>
<dbReference type="HOGENOM" id="CLU_026910_3_1_0"/>
<dbReference type="InParanoid" id="Q9RYE7"/>
<dbReference type="OrthoDB" id="9807019at2"/>
<dbReference type="Proteomes" id="UP000002524">
    <property type="component" value="Chromosome 1"/>
</dbReference>
<dbReference type="GO" id="GO:0005737">
    <property type="term" value="C:cytoplasm"/>
    <property type="evidence" value="ECO:0007669"/>
    <property type="project" value="UniProtKB-SubCell"/>
</dbReference>
<dbReference type="GO" id="GO:0005886">
    <property type="term" value="C:plasma membrane"/>
    <property type="evidence" value="ECO:0000318"/>
    <property type="project" value="GO_Central"/>
</dbReference>
<dbReference type="GO" id="GO:0005524">
    <property type="term" value="F:ATP binding"/>
    <property type="evidence" value="ECO:0007669"/>
    <property type="project" value="UniProtKB-UniRule"/>
</dbReference>
<dbReference type="GO" id="GO:0016887">
    <property type="term" value="F:ATP hydrolysis activity"/>
    <property type="evidence" value="ECO:0007669"/>
    <property type="project" value="InterPro"/>
</dbReference>
<dbReference type="GO" id="GO:0003688">
    <property type="term" value="F:DNA replication origin binding"/>
    <property type="evidence" value="ECO:0000318"/>
    <property type="project" value="GO_Central"/>
</dbReference>
<dbReference type="GO" id="GO:0008289">
    <property type="term" value="F:lipid binding"/>
    <property type="evidence" value="ECO:0007669"/>
    <property type="project" value="UniProtKB-KW"/>
</dbReference>
<dbReference type="GO" id="GO:0006260">
    <property type="term" value="P:DNA replication"/>
    <property type="evidence" value="ECO:0000318"/>
    <property type="project" value="GO_Central"/>
</dbReference>
<dbReference type="GO" id="GO:0006270">
    <property type="term" value="P:DNA replication initiation"/>
    <property type="evidence" value="ECO:0000318"/>
    <property type="project" value="GO_Central"/>
</dbReference>
<dbReference type="GO" id="GO:0006275">
    <property type="term" value="P:regulation of DNA replication"/>
    <property type="evidence" value="ECO:0007669"/>
    <property type="project" value="UniProtKB-UniRule"/>
</dbReference>
<dbReference type="CDD" id="cd00009">
    <property type="entry name" value="AAA"/>
    <property type="match status" value="1"/>
</dbReference>
<dbReference type="CDD" id="cd06571">
    <property type="entry name" value="Bac_DnaA_C"/>
    <property type="match status" value="1"/>
</dbReference>
<dbReference type="FunFam" id="1.10.8.60:FF:000003">
    <property type="entry name" value="Chromosomal replication initiator protein DnaA"/>
    <property type="match status" value="1"/>
</dbReference>
<dbReference type="FunFam" id="3.40.50.300:FF:000150">
    <property type="entry name" value="Chromosomal replication initiator protein DnaA"/>
    <property type="match status" value="1"/>
</dbReference>
<dbReference type="Gene3D" id="1.10.1750.10">
    <property type="match status" value="1"/>
</dbReference>
<dbReference type="Gene3D" id="1.10.8.60">
    <property type="match status" value="1"/>
</dbReference>
<dbReference type="Gene3D" id="3.30.300.180">
    <property type="match status" value="1"/>
</dbReference>
<dbReference type="Gene3D" id="3.40.50.300">
    <property type="entry name" value="P-loop containing nucleotide triphosphate hydrolases"/>
    <property type="match status" value="1"/>
</dbReference>
<dbReference type="HAMAP" id="MF_00377">
    <property type="entry name" value="DnaA_bact"/>
    <property type="match status" value="1"/>
</dbReference>
<dbReference type="InterPro" id="IPR003593">
    <property type="entry name" value="AAA+_ATPase"/>
</dbReference>
<dbReference type="InterPro" id="IPR001957">
    <property type="entry name" value="Chromosome_initiator_DnaA"/>
</dbReference>
<dbReference type="InterPro" id="IPR020591">
    <property type="entry name" value="Chromosome_initiator_DnaA-like"/>
</dbReference>
<dbReference type="InterPro" id="IPR018312">
    <property type="entry name" value="Chromosome_initiator_DnaA_CS"/>
</dbReference>
<dbReference type="InterPro" id="IPR013159">
    <property type="entry name" value="DnaA_C"/>
</dbReference>
<dbReference type="InterPro" id="IPR013317">
    <property type="entry name" value="DnaA_dom"/>
</dbReference>
<dbReference type="InterPro" id="IPR024633">
    <property type="entry name" value="DnaA_N_dom"/>
</dbReference>
<dbReference type="InterPro" id="IPR038454">
    <property type="entry name" value="DnaA_N_sf"/>
</dbReference>
<dbReference type="InterPro" id="IPR027417">
    <property type="entry name" value="P-loop_NTPase"/>
</dbReference>
<dbReference type="InterPro" id="IPR010921">
    <property type="entry name" value="Trp_repressor/repl_initiator"/>
</dbReference>
<dbReference type="NCBIfam" id="TIGR00362">
    <property type="entry name" value="DnaA"/>
    <property type="match status" value="1"/>
</dbReference>
<dbReference type="PANTHER" id="PTHR30050">
    <property type="entry name" value="CHROMOSOMAL REPLICATION INITIATOR PROTEIN DNAA"/>
    <property type="match status" value="1"/>
</dbReference>
<dbReference type="PANTHER" id="PTHR30050:SF2">
    <property type="entry name" value="CHROMOSOMAL REPLICATION INITIATOR PROTEIN DNAA"/>
    <property type="match status" value="1"/>
</dbReference>
<dbReference type="Pfam" id="PF00308">
    <property type="entry name" value="Bac_DnaA"/>
    <property type="match status" value="1"/>
</dbReference>
<dbReference type="Pfam" id="PF08299">
    <property type="entry name" value="Bac_DnaA_C"/>
    <property type="match status" value="1"/>
</dbReference>
<dbReference type="Pfam" id="PF11638">
    <property type="entry name" value="DnaA_N"/>
    <property type="match status" value="1"/>
</dbReference>
<dbReference type="PRINTS" id="PR00051">
    <property type="entry name" value="DNAA"/>
</dbReference>
<dbReference type="SMART" id="SM00382">
    <property type="entry name" value="AAA"/>
    <property type="match status" value="1"/>
</dbReference>
<dbReference type="SMART" id="SM00760">
    <property type="entry name" value="Bac_DnaA_C"/>
    <property type="match status" value="1"/>
</dbReference>
<dbReference type="SUPFAM" id="SSF52540">
    <property type="entry name" value="P-loop containing nucleoside triphosphate hydrolases"/>
    <property type="match status" value="1"/>
</dbReference>
<dbReference type="SUPFAM" id="SSF48295">
    <property type="entry name" value="TrpR-like"/>
    <property type="match status" value="1"/>
</dbReference>
<dbReference type="PROSITE" id="PS01008">
    <property type="entry name" value="DNAA"/>
    <property type="match status" value="1"/>
</dbReference>
<reference key="1">
    <citation type="journal article" date="1999" name="Science">
        <title>Genome sequence of the radioresistant bacterium Deinococcus radiodurans R1.</title>
        <authorList>
            <person name="White O."/>
            <person name="Eisen J.A."/>
            <person name="Heidelberg J.F."/>
            <person name="Hickey E.K."/>
            <person name="Peterson J.D."/>
            <person name="Dodson R.J."/>
            <person name="Haft D.H."/>
            <person name="Gwinn M.L."/>
            <person name="Nelson W.C."/>
            <person name="Richardson D.L."/>
            <person name="Moffat K.S."/>
            <person name="Qin H."/>
            <person name="Jiang L."/>
            <person name="Pamphile W."/>
            <person name="Crosby M."/>
            <person name="Shen M."/>
            <person name="Vamathevan J.J."/>
            <person name="Lam P."/>
            <person name="McDonald L.A."/>
            <person name="Utterback T.R."/>
            <person name="Zalewski C."/>
            <person name="Makarova K.S."/>
            <person name="Aravind L."/>
            <person name="Daly M.J."/>
            <person name="Minton K.W."/>
            <person name="Fleischmann R.D."/>
            <person name="Ketchum K.A."/>
            <person name="Nelson K.E."/>
            <person name="Salzberg S.L."/>
            <person name="Smith H.O."/>
            <person name="Venter J.C."/>
            <person name="Fraser C.M."/>
        </authorList>
    </citation>
    <scope>NUCLEOTIDE SEQUENCE [LARGE SCALE GENOMIC DNA]</scope>
    <source>
        <strain>ATCC 13939 / DSM 20539 / JCM 16871 / CCUG 27074 / LMG 4051 / NBRC 15346 / NCIMB 9279 / VKM B-1422 / R1</strain>
    </source>
</reference>
<reference key="2">
    <citation type="journal article" date="2021" name="Nucleic Acids Res.">
        <title>Evidence for a chromosome origin unwinding system broadly conserved in bacteria.</title>
        <authorList>
            <person name="Pelliciari S."/>
            <person name="Dong M.J."/>
            <person name="Gao F."/>
            <person name="Murray H."/>
        </authorList>
    </citation>
    <scope>FUNCTION</scope>
    <scope>ATP-BINDING</scope>
    <scope>MUTAGENESIS OF ILE-202 AND ARG-276</scope>
    <source>
        <strain>ATCC 700392 / 26695</strain>
    </source>
</reference>
<gene>
    <name evidence="1" type="primary">dnaA</name>
    <name type="ordered locus">DR_0002</name>
</gene>
<accession>Q9RYE7</accession>
<feature type="chain" id="PRO_0000114171" description="Chromosomal replication initiator protein DnaA">
    <location>
        <begin position="1"/>
        <end position="466"/>
    </location>
</feature>
<feature type="region of interest" description="Domain I, interacts with DnaA modulators" evidence="1">
    <location>
        <begin position="1"/>
        <end position="77"/>
    </location>
</feature>
<feature type="region of interest" description="Domain II" evidence="1">
    <location>
        <begin position="77"/>
        <end position="121"/>
    </location>
</feature>
<feature type="region of interest" description="Disordered" evidence="2">
    <location>
        <begin position="87"/>
        <end position="122"/>
    </location>
</feature>
<feature type="region of interest" description="Domain III, AAA+ region" evidence="1">
    <location>
        <begin position="122"/>
        <end position="338"/>
    </location>
</feature>
<feature type="region of interest" description="Domain IV, binds dsDNA" evidence="1">
    <location>
        <begin position="339"/>
        <end position="466"/>
    </location>
</feature>
<feature type="compositionally biased region" description="Low complexity" evidence="2">
    <location>
        <begin position="97"/>
        <end position="108"/>
    </location>
</feature>
<feature type="binding site" evidence="1">
    <location>
        <position position="166"/>
    </location>
    <ligand>
        <name>ATP</name>
        <dbReference type="ChEBI" id="CHEBI:30616"/>
    </ligand>
</feature>
<feature type="binding site" evidence="1">
    <location>
        <position position="168"/>
    </location>
    <ligand>
        <name>ATP</name>
        <dbReference type="ChEBI" id="CHEBI:30616"/>
    </ligand>
</feature>
<feature type="binding site" evidence="1">
    <location>
        <position position="169"/>
    </location>
    <ligand>
        <name>ATP</name>
        <dbReference type="ChEBI" id="CHEBI:30616"/>
    </ligand>
</feature>
<feature type="binding site" evidence="1">
    <location>
        <position position="170"/>
    </location>
    <ligand>
        <name>ATP</name>
        <dbReference type="ChEBI" id="CHEBI:30616"/>
    </ligand>
</feature>
<feature type="mutagenesis site" description="No strand separation in vitro, wild-type ATP binding." evidence="3">
    <original>I</original>
    <variation>A</variation>
    <location>
        <position position="202"/>
    </location>
</feature>
<feature type="mutagenesis site" description="No strand separation in vitro, wild-type ATP binding." evidence="3">
    <original>R</original>
    <variation>A</variation>
    <location>
        <position position="276"/>
    </location>
</feature>
<keyword id="KW-0067">ATP-binding</keyword>
<keyword id="KW-0963">Cytoplasm</keyword>
<keyword id="KW-0235">DNA replication</keyword>
<keyword id="KW-0238">DNA-binding</keyword>
<keyword id="KW-0446">Lipid-binding</keyword>
<keyword id="KW-0547">Nucleotide-binding</keyword>
<keyword id="KW-1185">Reference proteome</keyword>
<proteinExistence type="evidence at protein level"/>
<name>DNAA_DEIRA</name>